<organism>
    <name type="scientific">Pseudomonas aeruginosa (strain LESB58)</name>
    <dbReference type="NCBI Taxonomy" id="557722"/>
    <lineage>
        <taxon>Bacteria</taxon>
        <taxon>Pseudomonadati</taxon>
        <taxon>Pseudomonadota</taxon>
        <taxon>Gammaproteobacteria</taxon>
        <taxon>Pseudomonadales</taxon>
        <taxon>Pseudomonadaceae</taxon>
        <taxon>Pseudomonas</taxon>
    </lineage>
</organism>
<comment type="subcellular location">
    <subcellularLocation>
        <location evidence="1">Periplasm</location>
    </subcellularLocation>
</comment>
<comment type="similarity">
    <text evidence="1">Belongs to the UPF0312 family. Type 1 subfamily.</text>
</comment>
<accession>B7V411</accession>
<evidence type="ECO:0000255" key="1">
    <source>
        <dbReference type="HAMAP-Rule" id="MF_00780"/>
    </source>
</evidence>
<gene>
    <name type="ordered locus">PLES_04211</name>
</gene>
<keyword id="KW-0574">Periplasm</keyword>
<keyword id="KW-0732">Signal</keyword>
<sequence>MLKKTLAALALGSALFTAGQAMAADYKIDKEGQHAFIEFRIKHLGYSWLYGRFNDFDGSFTFDEKNPSADKVKVTINTNSVDTNHAERDKHLRSGDFLNVSKNPTATFESTEVKANGDSADITGNLTLNGVTKPVTIKAKLIGQGDDPWGGYRAGFEGSATLKLKDFGIKMDLGPASQEVELLLSVEGIRQ</sequence>
<proteinExistence type="inferred from homology"/>
<protein>
    <recommendedName>
        <fullName evidence="1">UPF0312 protein PLES_04211</fullName>
    </recommendedName>
</protein>
<feature type="signal peptide" evidence="1">
    <location>
        <begin position="1"/>
        <end position="23"/>
    </location>
</feature>
<feature type="chain" id="PRO_1000200475" description="UPF0312 protein PLES_04211">
    <location>
        <begin position="24"/>
        <end position="191"/>
    </location>
</feature>
<reference key="1">
    <citation type="journal article" date="2009" name="Genome Res.">
        <title>Newly introduced genomic prophage islands are critical determinants of in vivo competitiveness in the Liverpool epidemic strain of Pseudomonas aeruginosa.</title>
        <authorList>
            <person name="Winstanley C."/>
            <person name="Langille M.G.I."/>
            <person name="Fothergill J.L."/>
            <person name="Kukavica-Ibrulj I."/>
            <person name="Paradis-Bleau C."/>
            <person name="Sanschagrin F."/>
            <person name="Thomson N.R."/>
            <person name="Winsor G.L."/>
            <person name="Quail M.A."/>
            <person name="Lennard N."/>
            <person name="Bignell A."/>
            <person name="Clarke L."/>
            <person name="Seeger K."/>
            <person name="Saunders D."/>
            <person name="Harris D."/>
            <person name="Parkhill J."/>
            <person name="Hancock R.E.W."/>
            <person name="Brinkman F.S.L."/>
            <person name="Levesque R.C."/>
        </authorList>
    </citation>
    <scope>NUCLEOTIDE SEQUENCE [LARGE SCALE GENOMIC DNA]</scope>
    <source>
        <strain>LESB58</strain>
    </source>
</reference>
<name>Y421_PSEA8</name>
<dbReference type="EMBL" id="FM209186">
    <property type="protein sequence ID" value="CAW25148.1"/>
    <property type="molecule type" value="Genomic_DNA"/>
</dbReference>
<dbReference type="RefSeq" id="WP_003084626.1">
    <property type="nucleotide sequence ID" value="NC_011770.1"/>
</dbReference>
<dbReference type="SMR" id="B7V411"/>
<dbReference type="KEGG" id="pag:PLES_04211"/>
<dbReference type="HOGENOM" id="CLU_071003_1_2_6"/>
<dbReference type="GO" id="GO:0042597">
    <property type="term" value="C:periplasmic space"/>
    <property type="evidence" value="ECO:0007669"/>
    <property type="project" value="UniProtKB-SubCell"/>
</dbReference>
<dbReference type="FunFam" id="2.40.128.110:FF:000001">
    <property type="entry name" value="UPF0312 protein HMPREF3014_17255"/>
    <property type="match status" value="1"/>
</dbReference>
<dbReference type="Gene3D" id="2.40.128.110">
    <property type="entry name" value="Lipid/polyisoprenoid-binding, YceI-like"/>
    <property type="match status" value="1"/>
</dbReference>
<dbReference type="HAMAP" id="MF_00780">
    <property type="entry name" value="UPF0312"/>
    <property type="match status" value="1"/>
</dbReference>
<dbReference type="InterPro" id="IPR007372">
    <property type="entry name" value="Lipid/polyisoprenoid-bd_YceI"/>
</dbReference>
<dbReference type="InterPro" id="IPR036761">
    <property type="entry name" value="TTHA0802/YceI-like_sf"/>
</dbReference>
<dbReference type="InterPro" id="IPR023480">
    <property type="entry name" value="UPF0312/YceI"/>
</dbReference>
<dbReference type="NCBIfam" id="NF002994">
    <property type="entry name" value="PRK03757.1"/>
    <property type="match status" value="1"/>
</dbReference>
<dbReference type="PANTHER" id="PTHR34406">
    <property type="entry name" value="PROTEIN YCEI"/>
    <property type="match status" value="1"/>
</dbReference>
<dbReference type="PANTHER" id="PTHR34406:SF1">
    <property type="entry name" value="PROTEIN YCEI"/>
    <property type="match status" value="1"/>
</dbReference>
<dbReference type="Pfam" id="PF04264">
    <property type="entry name" value="YceI"/>
    <property type="match status" value="1"/>
</dbReference>
<dbReference type="SMART" id="SM00867">
    <property type="entry name" value="YceI"/>
    <property type="match status" value="1"/>
</dbReference>
<dbReference type="SUPFAM" id="SSF101874">
    <property type="entry name" value="YceI-like"/>
    <property type="match status" value="1"/>
</dbReference>